<accession>A9A5G9</accession>
<dbReference type="EC" id="6.3.2.6" evidence="1"/>
<dbReference type="EMBL" id="CP000866">
    <property type="protein sequence ID" value="ABX12680.1"/>
    <property type="molecule type" value="Genomic_DNA"/>
</dbReference>
<dbReference type="RefSeq" id="WP_012215167.1">
    <property type="nucleotide sequence ID" value="NC_010085.1"/>
</dbReference>
<dbReference type="SMR" id="A9A5G9"/>
<dbReference type="FunCoup" id="A9A5G9">
    <property type="interactions" value="206"/>
</dbReference>
<dbReference type="STRING" id="436308.Nmar_0784"/>
<dbReference type="EnsemblBacteria" id="ABX12680">
    <property type="protein sequence ID" value="ABX12680"/>
    <property type="gene ID" value="Nmar_0784"/>
</dbReference>
<dbReference type="GeneID" id="5773716"/>
<dbReference type="KEGG" id="nmr:Nmar_0784"/>
<dbReference type="eggNOG" id="arCOG04421">
    <property type="taxonomic scope" value="Archaea"/>
</dbReference>
<dbReference type="HOGENOM" id="CLU_045637_0_1_2"/>
<dbReference type="InParanoid" id="A9A5G9"/>
<dbReference type="OrthoDB" id="10775at2157"/>
<dbReference type="PhylomeDB" id="A9A5G9"/>
<dbReference type="UniPathway" id="UPA00074">
    <property type="reaction ID" value="UER00131"/>
</dbReference>
<dbReference type="Proteomes" id="UP000000792">
    <property type="component" value="Chromosome"/>
</dbReference>
<dbReference type="GO" id="GO:0005524">
    <property type="term" value="F:ATP binding"/>
    <property type="evidence" value="ECO:0007669"/>
    <property type="project" value="UniProtKB-KW"/>
</dbReference>
<dbReference type="GO" id="GO:0004639">
    <property type="term" value="F:phosphoribosylaminoimidazolesuccinocarboxamide synthase activity"/>
    <property type="evidence" value="ECO:0000318"/>
    <property type="project" value="GO_Central"/>
</dbReference>
<dbReference type="GO" id="GO:0006189">
    <property type="term" value="P:'de novo' IMP biosynthetic process"/>
    <property type="evidence" value="ECO:0000318"/>
    <property type="project" value="GO_Central"/>
</dbReference>
<dbReference type="CDD" id="cd01414">
    <property type="entry name" value="SAICAR_synt_Sc"/>
    <property type="match status" value="1"/>
</dbReference>
<dbReference type="FunFam" id="3.30.470.20:FF:000145">
    <property type="entry name" value="Phosphoribosylaminoimidazole-succinocarboxamide synthase"/>
    <property type="match status" value="1"/>
</dbReference>
<dbReference type="Gene3D" id="3.30.470.20">
    <property type="entry name" value="ATP-grasp fold, B domain"/>
    <property type="match status" value="1"/>
</dbReference>
<dbReference type="Gene3D" id="3.30.200.20">
    <property type="entry name" value="Phosphorylase Kinase, domain 1"/>
    <property type="match status" value="1"/>
</dbReference>
<dbReference type="HAMAP" id="MF_00137">
    <property type="entry name" value="SAICAR_synth"/>
    <property type="match status" value="1"/>
</dbReference>
<dbReference type="InterPro" id="IPR028923">
    <property type="entry name" value="SAICAR_synt/ADE2_N"/>
</dbReference>
<dbReference type="InterPro" id="IPR001636">
    <property type="entry name" value="SAICAR_synth"/>
</dbReference>
<dbReference type="InterPro" id="IPR018236">
    <property type="entry name" value="SAICAR_synthetase_CS"/>
</dbReference>
<dbReference type="NCBIfam" id="TIGR00081">
    <property type="entry name" value="purC"/>
    <property type="match status" value="1"/>
</dbReference>
<dbReference type="PANTHER" id="PTHR43700">
    <property type="entry name" value="PHOSPHORIBOSYLAMINOIMIDAZOLE-SUCCINOCARBOXAMIDE SYNTHASE"/>
    <property type="match status" value="1"/>
</dbReference>
<dbReference type="PANTHER" id="PTHR43700:SF1">
    <property type="entry name" value="PHOSPHORIBOSYLAMINOIMIDAZOLE-SUCCINOCARBOXAMIDE SYNTHASE"/>
    <property type="match status" value="1"/>
</dbReference>
<dbReference type="Pfam" id="PF01259">
    <property type="entry name" value="SAICAR_synt"/>
    <property type="match status" value="1"/>
</dbReference>
<dbReference type="SUPFAM" id="SSF56104">
    <property type="entry name" value="SAICAR synthase-like"/>
    <property type="match status" value="1"/>
</dbReference>
<dbReference type="PROSITE" id="PS01057">
    <property type="entry name" value="SAICAR_SYNTHETASE_1"/>
    <property type="match status" value="1"/>
</dbReference>
<dbReference type="PROSITE" id="PS01058">
    <property type="entry name" value="SAICAR_SYNTHETASE_2"/>
    <property type="match status" value="1"/>
</dbReference>
<comment type="catalytic activity">
    <reaction evidence="1">
        <text>5-amino-1-(5-phospho-D-ribosyl)imidazole-4-carboxylate + L-aspartate + ATP = (2S)-2-[5-amino-1-(5-phospho-beta-D-ribosyl)imidazole-4-carboxamido]succinate + ADP + phosphate + 2 H(+)</text>
        <dbReference type="Rhea" id="RHEA:22628"/>
        <dbReference type="ChEBI" id="CHEBI:15378"/>
        <dbReference type="ChEBI" id="CHEBI:29991"/>
        <dbReference type="ChEBI" id="CHEBI:30616"/>
        <dbReference type="ChEBI" id="CHEBI:43474"/>
        <dbReference type="ChEBI" id="CHEBI:58443"/>
        <dbReference type="ChEBI" id="CHEBI:77657"/>
        <dbReference type="ChEBI" id="CHEBI:456216"/>
        <dbReference type="EC" id="6.3.2.6"/>
    </reaction>
</comment>
<comment type="pathway">
    <text evidence="1">Purine metabolism; IMP biosynthesis via de novo pathway; 5-amino-1-(5-phospho-D-ribosyl)imidazole-4-carboxamide from 5-amino-1-(5-phospho-D-ribosyl)imidazole-4-carboxylate: step 1/2.</text>
</comment>
<comment type="similarity">
    <text evidence="1">Belongs to the SAICAR synthetase family.</text>
</comment>
<proteinExistence type="inferred from homology"/>
<gene>
    <name evidence="1" type="primary">purC</name>
    <name type="ordered locus">Nmar_0784</name>
</gene>
<reference key="1">
    <citation type="journal article" date="2010" name="Proc. Natl. Acad. Sci. U.S.A.">
        <title>Nitrosopumilus maritimus genome reveals unique mechanisms for nitrification and autotrophy in globally distributed marine crenarchaea.</title>
        <authorList>
            <person name="Walker C.B."/>
            <person name="de la Torre J.R."/>
            <person name="Klotz M.G."/>
            <person name="Urakawa H."/>
            <person name="Pinel N."/>
            <person name="Arp D.J."/>
            <person name="Brochier-Armanet C."/>
            <person name="Chain P.S."/>
            <person name="Chan P.P."/>
            <person name="Gollabgir A."/>
            <person name="Hemp J."/>
            <person name="Hugler M."/>
            <person name="Karr E.A."/>
            <person name="Konneke M."/>
            <person name="Shin M."/>
            <person name="Lawton T.J."/>
            <person name="Lowe T."/>
            <person name="Martens-Habbena W."/>
            <person name="Sayavedra-Soto L.A."/>
            <person name="Lang D."/>
            <person name="Sievert S.M."/>
            <person name="Rosenzweig A.C."/>
            <person name="Manning G."/>
            <person name="Stahl D.A."/>
        </authorList>
    </citation>
    <scope>NUCLEOTIDE SEQUENCE [LARGE SCALE GENOMIC DNA]</scope>
    <source>
        <strain>SCM1</strain>
    </source>
</reference>
<name>PUR7_NITMS</name>
<keyword id="KW-0067">ATP-binding</keyword>
<keyword id="KW-0436">Ligase</keyword>
<keyword id="KW-0547">Nucleotide-binding</keyword>
<keyword id="KW-0658">Purine biosynthesis</keyword>
<keyword id="KW-1185">Reference proteome</keyword>
<organism>
    <name type="scientific">Nitrosopumilus maritimus (strain SCM1)</name>
    <dbReference type="NCBI Taxonomy" id="436308"/>
    <lineage>
        <taxon>Archaea</taxon>
        <taxon>Nitrososphaerota</taxon>
        <taxon>Nitrososphaeria</taxon>
        <taxon>Nitrosopumilales</taxon>
        <taxon>Nitrosopumilaceae</taxon>
        <taxon>Nitrosopumilus</taxon>
    </lineage>
</organism>
<feature type="chain" id="PRO_1000095997" description="Phosphoribosylaminoimidazole-succinocarboxamide synthase">
    <location>
        <begin position="1"/>
        <end position="274"/>
    </location>
</feature>
<evidence type="ECO:0000255" key="1">
    <source>
        <dbReference type="HAMAP-Rule" id="MF_00137"/>
    </source>
</evidence>
<protein>
    <recommendedName>
        <fullName evidence="1">Phosphoribosylaminoimidazole-succinocarboxamide synthase</fullName>
        <ecNumber evidence="1">6.3.2.6</ecNumber>
    </recommendedName>
    <alternativeName>
        <fullName evidence="1">SAICAR synthetase</fullName>
    </alternativeName>
</protein>
<sequence>MEFLTSGKVKDLYDVDESTLLFKFSDRVSAYDVKFKQDIPRKGEVLCKFAEFWFNELDVPNHFIKRESENEILVKKMKMLPIECVVRGYFYGSLVSRWKKGEVQVPEGTNTTLAAQLPEPIFDPTTKSEHDIPIDKNKAIEMNLVSEEQYNWLEKTSIEIYKKMAKITDDVGFILADLKLEFGILDDQITLGDSIGPDEYRLWPKDSFEVGKIQEAYDKQLLRDWLTANGYQKQFDDARDNGQEPIPPNIPSEIISKMTERYVTAYEKISGKSL</sequence>